<organism>
    <name type="scientific">Neisseria gonorrhoeae (strain ATCC 700825 / FA 1090)</name>
    <dbReference type="NCBI Taxonomy" id="242231"/>
    <lineage>
        <taxon>Bacteria</taxon>
        <taxon>Pseudomonadati</taxon>
        <taxon>Pseudomonadota</taxon>
        <taxon>Betaproteobacteria</taxon>
        <taxon>Neisseriales</taxon>
        <taxon>Neisseriaceae</taxon>
        <taxon>Neisseria</taxon>
    </lineage>
</organism>
<name>AROE_NEIG1</name>
<protein>
    <recommendedName>
        <fullName evidence="1">Shikimate dehydrogenase (NADP(+))</fullName>
        <shortName evidence="1">SDH</shortName>
        <ecNumber evidence="1">1.1.1.25</ecNumber>
    </recommendedName>
</protein>
<keyword id="KW-0028">Amino-acid biosynthesis</keyword>
<keyword id="KW-0057">Aromatic amino acid biosynthesis</keyword>
<keyword id="KW-0521">NADP</keyword>
<keyword id="KW-0560">Oxidoreductase</keyword>
<keyword id="KW-1185">Reference proteome</keyword>
<comment type="function">
    <text evidence="1">Involved in the biosynthesis of the chorismate, which leads to the biosynthesis of aromatic amino acids. Catalyzes the reversible NADPH linked reduction of 3-dehydroshikimate (DHSA) to yield shikimate (SA).</text>
</comment>
<comment type="catalytic activity">
    <reaction evidence="1">
        <text>shikimate + NADP(+) = 3-dehydroshikimate + NADPH + H(+)</text>
        <dbReference type="Rhea" id="RHEA:17737"/>
        <dbReference type="ChEBI" id="CHEBI:15378"/>
        <dbReference type="ChEBI" id="CHEBI:16630"/>
        <dbReference type="ChEBI" id="CHEBI:36208"/>
        <dbReference type="ChEBI" id="CHEBI:57783"/>
        <dbReference type="ChEBI" id="CHEBI:58349"/>
        <dbReference type="EC" id="1.1.1.25"/>
    </reaction>
</comment>
<comment type="pathway">
    <text evidence="1">Metabolic intermediate biosynthesis; chorismate biosynthesis; chorismate from D-erythrose 4-phosphate and phosphoenolpyruvate: step 4/7.</text>
</comment>
<comment type="subunit">
    <text evidence="1">Homodimer.</text>
</comment>
<comment type="similarity">
    <text evidence="1">Belongs to the shikimate dehydrogenase family.</text>
</comment>
<reference key="1">
    <citation type="submission" date="2003-03" db="EMBL/GenBank/DDBJ databases">
        <title>The complete genome sequence of Neisseria gonorrhoeae.</title>
        <authorList>
            <person name="Lewis L.A."/>
            <person name="Gillaspy A.F."/>
            <person name="McLaughlin R.E."/>
            <person name="Gipson M."/>
            <person name="Ducey T.F."/>
            <person name="Ownbey T."/>
            <person name="Hartman K."/>
            <person name="Nydick C."/>
            <person name="Carson M.B."/>
            <person name="Vaughn J."/>
            <person name="Thomson C."/>
            <person name="Song L."/>
            <person name="Lin S."/>
            <person name="Yuan X."/>
            <person name="Najar F."/>
            <person name="Zhan M."/>
            <person name="Ren Q."/>
            <person name="Zhu H."/>
            <person name="Qi S."/>
            <person name="Kenton S.M."/>
            <person name="Lai H."/>
            <person name="White J.D."/>
            <person name="Clifton S."/>
            <person name="Roe B.A."/>
            <person name="Dyer D.W."/>
        </authorList>
    </citation>
    <scope>NUCLEOTIDE SEQUENCE [LARGE SCALE GENOMIC DNA]</scope>
    <source>
        <strain>ATCC 700825 / FA 1090</strain>
    </source>
</reference>
<gene>
    <name evidence="1" type="primary">aroE</name>
    <name type="ordered locus">NGO_1602</name>
</gene>
<feature type="chain" id="PRO_1000021311" description="Shikimate dehydrogenase (NADP(+))">
    <location>
        <begin position="1"/>
        <end position="269"/>
    </location>
</feature>
<feature type="active site" description="Proton acceptor" evidence="1">
    <location>
        <position position="68"/>
    </location>
</feature>
<feature type="binding site" evidence="1">
    <location>
        <begin position="17"/>
        <end position="19"/>
    </location>
    <ligand>
        <name>shikimate</name>
        <dbReference type="ChEBI" id="CHEBI:36208"/>
    </ligand>
</feature>
<feature type="binding site" evidence="1">
    <location>
        <position position="64"/>
    </location>
    <ligand>
        <name>shikimate</name>
        <dbReference type="ChEBI" id="CHEBI:36208"/>
    </ligand>
</feature>
<feature type="binding site" evidence="1">
    <location>
        <position position="80"/>
    </location>
    <ligand>
        <name>NADP(+)</name>
        <dbReference type="ChEBI" id="CHEBI:58349"/>
    </ligand>
</feature>
<feature type="binding site" evidence="1">
    <location>
        <position position="89"/>
    </location>
    <ligand>
        <name>shikimate</name>
        <dbReference type="ChEBI" id="CHEBI:36208"/>
    </ligand>
</feature>
<feature type="binding site" evidence="1">
    <location>
        <position position="105"/>
    </location>
    <ligand>
        <name>shikimate</name>
        <dbReference type="ChEBI" id="CHEBI:36208"/>
    </ligand>
</feature>
<feature type="binding site" evidence="1">
    <location>
        <begin position="130"/>
        <end position="134"/>
    </location>
    <ligand>
        <name>NADP(+)</name>
        <dbReference type="ChEBI" id="CHEBI:58349"/>
    </ligand>
</feature>
<feature type="binding site" evidence="1">
    <location>
        <begin position="154"/>
        <end position="159"/>
    </location>
    <ligand>
        <name>NADP(+)</name>
        <dbReference type="ChEBI" id="CHEBI:58349"/>
    </ligand>
</feature>
<feature type="binding site" evidence="1">
    <location>
        <position position="213"/>
    </location>
    <ligand>
        <name>NADP(+)</name>
        <dbReference type="ChEBI" id="CHEBI:58349"/>
    </ligand>
</feature>
<feature type="binding site" evidence="1">
    <location>
        <position position="215"/>
    </location>
    <ligand>
        <name>shikimate</name>
        <dbReference type="ChEBI" id="CHEBI:36208"/>
    </ligand>
</feature>
<feature type="binding site" evidence="1">
    <location>
        <position position="237"/>
    </location>
    <ligand>
        <name>NADP(+)</name>
        <dbReference type="ChEBI" id="CHEBI:58349"/>
    </ligand>
</feature>
<sequence>MHALPRYAVFGNPAAHSKSPQIHQQFALQEGVDIEYGRICADIGGFAQAVSTFFETGGCGANVTVPFKQEAFHLADEHSDRALAAGAVNTLVWLEDGRIRGDNTDGIGLANDITQVKNIAIEGKTILLLGAGGAVRGVIPVLKEHRPARIVIANRTRAKAEELARLFGIEAVPMADVNGGFDIIINGTSGGLSGQLPAVSPKIFRDCRLAYDMVYGEAAKPFLDFARQSGAKKTADGLGMLVGQAAASYALWRGFKPDIRPVIEHMKAL</sequence>
<dbReference type="EC" id="1.1.1.25" evidence="1"/>
<dbReference type="EMBL" id="AE004969">
    <property type="protein sequence ID" value="AAW90230.1"/>
    <property type="molecule type" value="Genomic_DNA"/>
</dbReference>
<dbReference type="RefSeq" id="WP_003689536.1">
    <property type="nucleotide sequence ID" value="NC_002946.2"/>
</dbReference>
<dbReference type="RefSeq" id="YP_208642.1">
    <property type="nucleotide sequence ID" value="NC_002946.2"/>
</dbReference>
<dbReference type="SMR" id="Q5F6F7"/>
<dbReference type="STRING" id="242231.NGO_1602"/>
<dbReference type="GeneID" id="66753811"/>
<dbReference type="KEGG" id="ngo:NGO_1602"/>
<dbReference type="PATRIC" id="fig|242231.10.peg.1916"/>
<dbReference type="HOGENOM" id="CLU_044063_2_1_4"/>
<dbReference type="UniPathway" id="UPA00053">
    <property type="reaction ID" value="UER00087"/>
</dbReference>
<dbReference type="Proteomes" id="UP000000535">
    <property type="component" value="Chromosome"/>
</dbReference>
<dbReference type="GO" id="GO:0005829">
    <property type="term" value="C:cytosol"/>
    <property type="evidence" value="ECO:0007669"/>
    <property type="project" value="TreeGrafter"/>
</dbReference>
<dbReference type="GO" id="GO:0050661">
    <property type="term" value="F:NADP binding"/>
    <property type="evidence" value="ECO:0007669"/>
    <property type="project" value="InterPro"/>
</dbReference>
<dbReference type="GO" id="GO:0004764">
    <property type="term" value="F:shikimate 3-dehydrogenase (NADP+) activity"/>
    <property type="evidence" value="ECO:0007669"/>
    <property type="project" value="UniProtKB-UniRule"/>
</dbReference>
<dbReference type="GO" id="GO:0008652">
    <property type="term" value="P:amino acid biosynthetic process"/>
    <property type="evidence" value="ECO:0007669"/>
    <property type="project" value="UniProtKB-KW"/>
</dbReference>
<dbReference type="GO" id="GO:0009073">
    <property type="term" value="P:aromatic amino acid family biosynthetic process"/>
    <property type="evidence" value="ECO:0007669"/>
    <property type="project" value="UniProtKB-KW"/>
</dbReference>
<dbReference type="GO" id="GO:0009423">
    <property type="term" value="P:chorismate biosynthetic process"/>
    <property type="evidence" value="ECO:0007669"/>
    <property type="project" value="UniProtKB-UniRule"/>
</dbReference>
<dbReference type="GO" id="GO:0019632">
    <property type="term" value="P:shikimate metabolic process"/>
    <property type="evidence" value="ECO:0007669"/>
    <property type="project" value="InterPro"/>
</dbReference>
<dbReference type="CDD" id="cd01065">
    <property type="entry name" value="NAD_bind_Shikimate_DH"/>
    <property type="match status" value="1"/>
</dbReference>
<dbReference type="FunFam" id="3.40.50.10860:FF:000006">
    <property type="entry name" value="Shikimate dehydrogenase (NADP(+))"/>
    <property type="match status" value="1"/>
</dbReference>
<dbReference type="Gene3D" id="3.40.50.10860">
    <property type="entry name" value="Leucine Dehydrogenase, chain A, domain 1"/>
    <property type="match status" value="1"/>
</dbReference>
<dbReference type="Gene3D" id="3.40.50.720">
    <property type="entry name" value="NAD(P)-binding Rossmann-like Domain"/>
    <property type="match status" value="1"/>
</dbReference>
<dbReference type="HAMAP" id="MF_00222">
    <property type="entry name" value="Shikimate_DH_AroE"/>
    <property type="match status" value="1"/>
</dbReference>
<dbReference type="InterPro" id="IPR046346">
    <property type="entry name" value="Aminoacid_DH-like_N_sf"/>
</dbReference>
<dbReference type="InterPro" id="IPR036291">
    <property type="entry name" value="NAD(P)-bd_dom_sf"/>
</dbReference>
<dbReference type="InterPro" id="IPR041121">
    <property type="entry name" value="SDH_C"/>
</dbReference>
<dbReference type="InterPro" id="IPR011342">
    <property type="entry name" value="Shikimate_DH"/>
</dbReference>
<dbReference type="InterPro" id="IPR013708">
    <property type="entry name" value="Shikimate_DH-bd_N"/>
</dbReference>
<dbReference type="InterPro" id="IPR022893">
    <property type="entry name" value="Shikimate_DH_fam"/>
</dbReference>
<dbReference type="InterPro" id="IPR006151">
    <property type="entry name" value="Shikm_DH/Glu-tRNA_Rdtase"/>
</dbReference>
<dbReference type="NCBIfam" id="TIGR00507">
    <property type="entry name" value="aroE"/>
    <property type="match status" value="1"/>
</dbReference>
<dbReference type="NCBIfam" id="NF001310">
    <property type="entry name" value="PRK00258.1-2"/>
    <property type="match status" value="1"/>
</dbReference>
<dbReference type="PANTHER" id="PTHR21089:SF1">
    <property type="entry name" value="BIFUNCTIONAL 3-DEHYDROQUINATE DEHYDRATASE_SHIKIMATE DEHYDROGENASE, CHLOROPLASTIC"/>
    <property type="match status" value="1"/>
</dbReference>
<dbReference type="PANTHER" id="PTHR21089">
    <property type="entry name" value="SHIKIMATE DEHYDROGENASE"/>
    <property type="match status" value="1"/>
</dbReference>
<dbReference type="Pfam" id="PF18317">
    <property type="entry name" value="SDH_C"/>
    <property type="match status" value="1"/>
</dbReference>
<dbReference type="Pfam" id="PF01488">
    <property type="entry name" value="Shikimate_DH"/>
    <property type="match status" value="1"/>
</dbReference>
<dbReference type="Pfam" id="PF08501">
    <property type="entry name" value="Shikimate_dh_N"/>
    <property type="match status" value="1"/>
</dbReference>
<dbReference type="SUPFAM" id="SSF53223">
    <property type="entry name" value="Aminoacid dehydrogenase-like, N-terminal domain"/>
    <property type="match status" value="1"/>
</dbReference>
<dbReference type="SUPFAM" id="SSF51735">
    <property type="entry name" value="NAD(P)-binding Rossmann-fold domains"/>
    <property type="match status" value="1"/>
</dbReference>
<accession>Q5F6F7</accession>
<evidence type="ECO:0000255" key="1">
    <source>
        <dbReference type="HAMAP-Rule" id="MF_00222"/>
    </source>
</evidence>
<proteinExistence type="inferred from homology"/>